<dbReference type="EMBL" id="M26938">
    <property type="protein sequence ID" value="AAA26373.1"/>
    <property type="molecule type" value="Genomic_DNA"/>
</dbReference>
<dbReference type="EMBL" id="X12867">
    <property type="protein sequence ID" value="CAA31347.1"/>
    <property type="molecule type" value="Genomic_DNA"/>
</dbReference>
<dbReference type="EMBL" id="X15914">
    <property type="protein sequence ID" value="CAA34027.1"/>
    <property type="molecule type" value="Genomic_DNA"/>
</dbReference>
<dbReference type="PIR" id="JS0239">
    <property type="entry name" value="JS0239"/>
</dbReference>
<dbReference type="SMR" id="P13359"/>
<dbReference type="eggNOG" id="COG0745">
    <property type="taxonomic scope" value="Bacteria"/>
</dbReference>
<dbReference type="GO" id="GO:0005829">
    <property type="term" value="C:cytosol"/>
    <property type="evidence" value="ECO:0007669"/>
    <property type="project" value="TreeGrafter"/>
</dbReference>
<dbReference type="GO" id="GO:0032993">
    <property type="term" value="C:protein-DNA complex"/>
    <property type="evidence" value="ECO:0007669"/>
    <property type="project" value="TreeGrafter"/>
</dbReference>
<dbReference type="GO" id="GO:0000156">
    <property type="term" value="F:phosphorelay response regulator activity"/>
    <property type="evidence" value="ECO:0007669"/>
    <property type="project" value="TreeGrafter"/>
</dbReference>
<dbReference type="GO" id="GO:0000976">
    <property type="term" value="F:transcription cis-regulatory region binding"/>
    <property type="evidence" value="ECO:0007669"/>
    <property type="project" value="TreeGrafter"/>
</dbReference>
<dbReference type="GO" id="GO:0006355">
    <property type="term" value="P:regulation of DNA-templated transcription"/>
    <property type="evidence" value="ECO:0007669"/>
    <property type="project" value="InterPro"/>
</dbReference>
<dbReference type="CDD" id="cd17594">
    <property type="entry name" value="REC_OmpR_VirG"/>
    <property type="match status" value="1"/>
</dbReference>
<dbReference type="CDD" id="cd00383">
    <property type="entry name" value="trans_reg_C"/>
    <property type="match status" value="1"/>
</dbReference>
<dbReference type="FunFam" id="1.10.10.10:FF:000099">
    <property type="entry name" value="Two-component system response regulator TorR"/>
    <property type="match status" value="1"/>
</dbReference>
<dbReference type="Gene3D" id="3.40.50.2300">
    <property type="match status" value="1"/>
</dbReference>
<dbReference type="Gene3D" id="6.10.250.690">
    <property type="match status" value="1"/>
</dbReference>
<dbReference type="Gene3D" id="1.10.10.10">
    <property type="entry name" value="Winged helix-like DNA-binding domain superfamily/Winged helix DNA-binding domain"/>
    <property type="match status" value="1"/>
</dbReference>
<dbReference type="InterPro" id="IPR011006">
    <property type="entry name" value="CheY-like_superfamily"/>
</dbReference>
<dbReference type="InterPro" id="IPR001867">
    <property type="entry name" value="OmpR/PhoB-type_DNA-bd"/>
</dbReference>
<dbReference type="InterPro" id="IPR016032">
    <property type="entry name" value="Sig_transdc_resp-reg_C-effctor"/>
</dbReference>
<dbReference type="InterPro" id="IPR001789">
    <property type="entry name" value="Sig_transdc_resp-reg_receiver"/>
</dbReference>
<dbReference type="InterPro" id="IPR039420">
    <property type="entry name" value="WalR-like"/>
</dbReference>
<dbReference type="InterPro" id="IPR036388">
    <property type="entry name" value="WH-like_DNA-bd_sf"/>
</dbReference>
<dbReference type="NCBIfam" id="NF010430">
    <property type="entry name" value="PRK13856.1"/>
    <property type="match status" value="1"/>
</dbReference>
<dbReference type="PANTHER" id="PTHR48111:SF4">
    <property type="entry name" value="DNA-BINDING DUAL TRANSCRIPTIONAL REGULATOR OMPR"/>
    <property type="match status" value="1"/>
</dbReference>
<dbReference type="PANTHER" id="PTHR48111">
    <property type="entry name" value="REGULATOR OF RPOS"/>
    <property type="match status" value="1"/>
</dbReference>
<dbReference type="Pfam" id="PF00072">
    <property type="entry name" value="Response_reg"/>
    <property type="match status" value="1"/>
</dbReference>
<dbReference type="Pfam" id="PF00486">
    <property type="entry name" value="Trans_reg_C"/>
    <property type="match status" value="1"/>
</dbReference>
<dbReference type="SMART" id="SM00448">
    <property type="entry name" value="REC"/>
    <property type="match status" value="1"/>
</dbReference>
<dbReference type="SMART" id="SM00862">
    <property type="entry name" value="Trans_reg_C"/>
    <property type="match status" value="1"/>
</dbReference>
<dbReference type="SUPFAM" id="SSF46894">
    <property type="entry name" value="C-terminal effector domain of the bipartite response regulators"/>
    <property type="match status" value="1"/>
</dbReference>
<dbReference type="SUPFAM" id="SSF52172">
    <property type="entry name" value="CheY-like"/>
    <property type="match status" value="1"/>
</dbReference>
<dbReference type="PROSITE" id="PS51755">
    <property type="entry name" value="OMPR_PHOB"/>
    <property type="match status" value="1"/>
</dbReference>
<dbReference type="PROSITE" id="PS50110">
    <property type="entry name" value="RESPONSE_REGULATORY"/>
    <property type="match status" value="1"/>
</dbReference>
<evidence type="ECO:0000255" key="1">
    <source>
        <dbReference type="PROSITE-ProRule" id="PRU00169"/>
    </source>
</evidence>
<evidence type="ECO:0000255" key="2">
    <source>
        <dbReference type="PROSITE-ProRule" id="PRU01091"/>
    </source>
</evidence>
<sequence>MKHVLVIDDDVAMRHLIVEYLTIHAFKVTAVADSKQFNRVLSSETVDVAVVDLNLGREDGLEIVRTLATKSDVPMIIISGDRLEEADKVVALELGATDFIAKPFGTREFLARIRVALRERPSVARTKDRRSFYFADWTLNIRQRRLISEEGGEIKLTAGEFNLLVAFLEKPRDVLSREQLLIASRVREEEVYDRSIDVLIFRLRRKLEGDPTSPQLIKTARGAGYFFDADVNVSYGGMMAA</sequence>
<gene>
    <name type="primary">virG</name>
</gene>
<name>VIRG_RHIRH</name>
<geneLocation type="plasmid">
    <name>pRiA4b</name>
</geneLocation>
<protein>
    <recommendedName>
        <fullName>Regulatory protein VirG</fullName>
    </recommendedName>
</protein>
<reference key="1">
    <citation type="journal article" date="1989" name="Gene">
        <title>Putative start codon TTG for the regulatory protein VirG of the hairy-root-inducing plasmid pRiA4.</title>
        <authorList>
            <person name="Aoyama T."/>
            <person name="Hirayama T."/>
            <person name="Tamamoto S."/>
            <person name="Oka A."/>
        </authorList>
    </citation>
    <scope>NUCLEOTIDE SEQUENCE [GENOMIC DNA]</scope>
    <source>
        <strain>A4</strain>
    </source>
</reference>
<reference key="2">
    <citation type="journal article" date="1988" name="Mol. Gen. Genet.">
        <title>Organization and characterization of the virCD genes from Agrobacterium rhizogenes.</title>
        <authorList>
            <person name="Hirayama T."/>
            <person name="Muranaka T."/>
            <person name="Ohkawa H."/>
            <person name="Oka A."/>
        </authorList>
    </citation>
    <scope>NUCLEOTIDE SEQUENCE [GENOMIC DNA] OF 206-241</scope>
</reference>
<reference key="3">
    <citation type="journal article" date="1989" name="Nucleic Acids Res.">
        <title>Signal structure for transcriptional activation in the upstream regions of virulence genes on the hairy-root-inducing plasmid A4.</title>
        <authorList>
            <person name="Aoyama T."/>
            <person name="Takanami M."/>
            <person name="Oka A."/>
        </authorList>
    </citation>
    <scope>NUCLEOTIDE SEQUENCE [GENOMIC DNA] OF 1-8</scope>
    <source>
        <strain>A4</strain>
    </source>
</reference>
<accession>P13359</accession>
<comment type="function">
    <text>VirG is required for the positive regulation of at least two vir loci encoded by the Ri plasmid of A.rhizogenes.</text>
</comment>
<comment type="subcellular location">
    <subcellularLocation>
        <location>Cytoplasm</location>
    </subcellularLocation>
</comment>
<comment type="PTM">
    <text>Phosphorylated by wide host range (WHR) VirA protein.</text>
</comment>
<proteinExistence type="inferred from homology"/>
<organism>
    <name type="scientific">Rhizobium rhizogenes</name>
    <name type="common">Agrobacterium rhizogenes</name>
    <dbReference type="NCBI Taxonomy" id="359"/>
    <lineage>
        <taxon>Bacteria</taxon>
        <taxon>Pseudomonadati</taxon>
        <taxon>Pseudomonadota</taxon>
        <taxon>Alphaproteobacteria</taxon>
        <taxon>Hyphomicrobiales</taxon>
        <taxon>Rhizobiaceae</taxon>
        <taxon>Rhizobium/Agrobacterium group</taxon>
        <taxon>Rhizobium</taxon>
    </lineage>
</organism>
<keyword id="KW-0010">Activator</keyword>
<keyword id="KW-0192">Crown gall tumor</keyword>
<keyword id="KW-0963">Cytoplasm</keyword>
<keyword id="KW-0238">DNA-binding</keyword>
<keyword id="KW-0597">Phosphoprotein</keyword>
<keyword id="KW-0614">Plasmid</keyword>
<keyword id="KW-0804">Transcription</keyword>
<keyword id="KW-0805">Transcription regulation</keyword>
<keyword id="KW-0902">Two-component regulatory system</keyword>
<feature type="chain" id="PRO_0000081264" description="Regulatory protein VirG">
    <location>
        <begin position="1"/>
        <end position="241"/>
    </location>
</feature>
<feature type="domain" description="Response regulatory" evidence="1">
    <location>
        <begin position="3"/>
        <end position="117"/>
    </location>
</feature>
<feature type="DNA-binding region" description="OmpR/PhoB-type" evidence="2">
    <location>
        <begin position="129"/>
        <end position="229"/>
    </location>
</feature>
<feature type="modified residue" description="4-aspartylphosphate" evidence="1">
    <location>
        <position position="52"/>
    </location>
</feature>